<name>BPT_PSEPK</name>
<proteinExistence type="inferred from homology"/>
<gene>
    <name evidence="1" type="primary">bpt</name>
    <name type="ordered locus">PP_4006</name>
</gene>
<accession>Q88FS6</accession>
<sequence length="235" mass="27889">MTELARLKFYATQPHSCSYLPEEQATTLFLDPSQPMDVHVYADLSEMGFRRSGDHLYRPHCQNCNACVPARIPAARFIPNRQQRRILKRNADLTVTAARPAFKEEYFELYRRYIETRHADGDMYPPSRDQFSTFLVRDLPFCWFYEFRLEGRLMAVAVCDLLPNGLSAVYTFYEPDEERRSLGRFAILWQITEALRQNLEAVYLGYWIKNCKKMNYKTQYRPIELLINQRWVTLN</sequence>
<comment type="function">
    <text evidence="1">Functions in the N-end rule pathway of protein degradation where it conjugates Leu from its aminoacyl-tRNA to the N-termini of proteins containing an N-terminal aspartate or glutamate.</text>
</comment>
<comment type="catalytic activity">
    <reaction evidence="1">
        <text>N-terminal L-glutamyl-[protein] + L-leucyl-tRNA(Leu) = N-terminal L-leucyl-L-glutamyl-[protein] + tRNA(Leu) + H(+)</text>
        <dbReference type="Rhea" id="RHEA:50412"/>
        <dbReference type="Rhea" id="RHEA-COMP:9613"/>
        <dbReference type="Rhea" id="RHEA-COMP:9622"/>
        <dbReference type="Rhea" id="RHEA-COMP:12664"/>
        <dbReference type="Rhea" id="RHEA-COMP:12668"/>
        <dbReference type="ChEBI" id="CHEBI:15378"/>
        <dbReference type="ChEBI" id="CHEBI:64721"/>
        <dbReference type="ChEBI" id="CHEBI:78442"/>
        <dbReference type="ChEBI" id="CHEBI:78494"/>
        <dbReference type="ChEBI" id="CHEBI:133041"/>
        <dbReference type="EC" id="2.3.2.29"/>
    </reaction>
</comment>
<comment type="catalytic activity">
    <reaction evidence="1">
        <text>N-terminal L-aspartyl-[protein] + L-leucyl-tRNA(Leu) = N-terminal L-leucyl-L-aspartyl-[protein] + tRNA(Leu) + H(+)</text>
        <dbReference type="Rhea" id="RHEA:50420"/>
        <dbReference type="Rhea" id="RHEA-COMP:9613"/>
        <dbReference type="Rhea" id="RHEA-COMP:9622"/>
        <dbReference type="Rhea" id="RHEA-COMP:12669"/>
        <dbReference type="Rhea" id="RHEA-COMP:12674"/>
        <dbReference type="ChEBI" id="CHEBI:15378"/>
        <dbReference type="ChEBI" id="CHEBI:64720"/>
        <dbReference type="ChEBI" id="CHEBI:78442"/>
        <dbReference type="ChEBI" id="CHEBI:78494"/>
        <dbReference type="ChEBI" id="CHEBI:133042"/>
        <dbReference type="EC" id="2.3.2.29"/>
    </reaction>
</comment>
<comment type="subcellular location">
    <subcellularLocation>
        <location evidence="1">Cytoplasm</location>
    </subcellularLocation>
</comment>
<comment type="similarity">
    <text evidence="1">Belongs to the R-transferase family. Bpt subfamily.</text>
</comment>
<reference key="1">
    <citation type="journal article" date="2002" name="Environ. Microbiol.">
        <title>Complete genome sequence and comparative analysis of the metabolically versatile Pseudomonas putida KT2440.</title>
        <authorList>
            <person name="Nelson K.E."/>
            <person name="Weinel C."/>
            <person name="Paulsen I.T."/>
            <person name="Dodson R.J."/>
            <person name="Hilbert H."/>
            <person name="Martins dos Santos V.A.P."/>
            <person name="Fouts D.E."/>
            <person name="Gill S.R."/>
            <person name="Pop M."/>
            <person name="Holmes M."/>
            <person name="Brinkac L.M."/>
            <person name="Beanan M.J."/>
            <person name="DeBoy R.T."/>
            <person name="Daugherty S.C."/>
            <person name="Kolonay J.F."/>
            <person name="Madupu R."/>
            <person name="Nelson W.C."/>
            <person name="White O."/>
            <person name="Peterson J.D."/>
            <person name="Khouri H.M."/>
            <person name="Hance I."/>
            <person name="Chris Lee P."/>
            <person name="Holtzapple E.K."/>
            <person name="Scanlan D."/>
            <person name="Tran K."/>
            <person name="Moazzez A."/>
            <person name="Utterback T.R."/>
            <person name="Rizzo M."/>
            <person name="Lee K."/>
            <person name="Kosack D."/>
            <person name="Moestl D."/>
            <person name="Wedler H."/>
            <person name="Lauber J."/>
            <person name="Stjepandic D."/>
            <person name="Hoheisel J."/>
            <person name="Straetz M."/>
            <person name="Heim S."/>
            <person name="Kiewitz C."/>
            <person name="Eisen J.A."/>
            <person name="Timmis K.N."/>
            <person name="Duesterhoeft A."/>
            <person name="Tuemmler B."/>
            <person name="Fraser C.M."/>
        </authorList>
    </citation>
    <scope>NUCLEOTIDE SEQUENCE [LARGE SCALE GENOMIC DNA]</scope>
    <source>
        <strain>ATCC 47054 / DSM 6125 / CFBP 8728 / NCIMB 11950 / KT2440</strain>
    </source>
</reference>
<keyword id="KW-0012">Acyltransferase</keyword>
<keyword id="KW-0963">Cytoplasm</keyword>
<keyword id="KW-1185">Reference proteome</keyword>
<keyword id="KW-0808">Transferase</keyword>
<evidence type="ECO:0000255" key="1">
    <source>
        <dbReference type="HAMAP-Rule" id="MF_00689"/>
    </source>
</evidence>
<organism>
    <name type="scientific">Pseudomonas putida (strain ATCC 47054 / DSM 6125 / CFBP 8728 / NCIMB 11950 / KT2440)</name>
    <dbReference type="NCBI Taxonomy" id="160488"/>
    <lineage>
        <taxon>Bacteria</taxon>
        <taxon>Pseudomonadati</taxon>
        <taxon>Pseudomonadota</taxon>
        <taxon>Gammaproteobacteria</taxon>
        <taxon>Pseudomonadales</taxon>
        <taxon>Pseudomonadaceae</taxon>
        <taxon>Pseudomonas</taxon>
    </lineage>
</organism>
<dbReference type="EC" id="2.3.2.29" evidence="1"/>
<dbReference type="EMBL" id="AE015451">
    <property type="protein sequence ID" value="AAN69600.1"/>
    <property type="molecule type" value="Genomic_DNA"/>
</dbReference>
<dbReference type="RefSeq" id="NP_746136.1">
    <property type="nucleotide sequence ID" value="NC_002947.4"/>
</dbReference>
<dbReference type="RefSeq" id="WP_003251215.1">
    <property type="nucleotide sequence ID" value="NZ_CP169744.1"/>
</dbReference>
<dbReference type="SMR" id="Q88FS6"/>
<dbReference type="STRING" id="160488.PP_4006"/>
<dbReference type="PaxDb" id="160488-PP_4006"/>
<dbReference type="KEGG" id="ppu:PP_4006"/>
<dbReference type="PATRIC" id="fig|160488.4.peg.4262"/>
<dbReference type="eggNOG" id="COG2935">
    <property type="taxonomic scope" value="Bacteria"/>
</dbReference>
<dbReference type="HOGENOM" id="CLU_077607_0_0_6"/>
<dbReference type="OrthoDB" id="9782022at2"/>
<dbReference type="PhylomeDB" id="Q88FS6"/>
<dbReference type="BioCyc" id="PPUT160488:G1G01-4273-MONOMER"/>
<dbReference type="Proteomes" id="UP000000556">
    <property type="component" value="Chromosome"/>
</dbReference>
<dbReference type="GO" id="GO:0005737">
    <property type="term" value="C:cytoplasm"/>
    <property type="evidence" value="ECO:0007669"/>
    <property type="project" value="UniProtKB-SubCell"/>
</dbReference>
<dbReference type="GO" id="GO:0004057">
    <property type="term" value="F:arginyl-tRNA--protein transferase activity"/>
    <property type="evidence" value="ECO:0007669"/>
    <property type="project" value="InterPro"/>
</dbReference>
<dbReference type="GO" id="GO:0008914">
    <property type="term" value="F:leucyl-tRNA--protein transferase activity"/>
    <property type="evidence" value="ECO:0007669"/>
    <property type="project" value="UniProtKB-UniRule"/>
</dbReference>
<dbReference type="GO" id="GO:0071596">
    <property type="term" value="P:ubiquitin-dependent protein catabolic process via the N-end rule pathway"/>
    <property type="evidence" value="ECO:0007669"/>
    <property type="project" value="InterPro"/>
</dbReference>
<dbReference type="HAMAP" id="MF_00689">
    <property type="entry name" value="Bpt"/>
    <property type="match status" value="1"/>
</dbReference>
<dbReference type="InterPro" id="IPR016181">
    <property type="entry name" value="Acyl_CoA_acyltransferase"/>
</dbReference>
<dbReference type="InterPro" id="IPR017138">
    <property type="entry name" value="Asp_Glu_LeuTrfase"/>
</dbReference>
<dbReference type="InterPro" id="IPR030700">
    <property type="entry name" value="N-end_Aminoacyl_Trfase"/>
</dbReference>
<dbReference type="InterPro" id="IPR007472">
    <property type="entry name" value="N-end_Aminoacyl_Trfase_C"/>
</dbReference>
<dbReference type="InterPro" id="IPR007471">
    <property type="entry name" value="N-end_Aminoacyl_Trfase_N"/>
</dbReference>
<dbReference type="NCBIfam" id="NF002341">
    <property type="entry name" value="PRK01305.1-1"/>
    <property type="match status" value="1"/>
</dbReference>
<dbReference type="NCBIfam" id="NF002342">
    <property type="entry name" value="PRK01305.1-3"/>
    <property type="match status" value="1"/>
</dbReference>
<dbReference type="NCBIfam" id="NF002345">
    <property type="entry name" value="PRK01305.2-2"/>
    <property type="match status" value="1"/>
</dbReference>
<dbReference type="NCBIfam" id="NF002346">
    <property type="entry name" value="PRK01305.2-3"/>
    <property type="match status" value="1"/>
</dbReference>
<dbReference type="PANTHER" id="PTHR21367">
    <property type="entry name" value="ARGININE-TRNA-PROTEIN TRANSFERASE 1"/>
    <property type="match status" value="1"/>
</dbReference>
<dbReference type="PANTHER" id="PTHR21367:SF1">
    <property type="entry name" value="ARGINYL-TRNA--PROTEIN TRANSFERASE 1"/>
    <property type="match status" value="1"/>
</dbReference>
<dbReference type="Pfam" id="PF04377">
    <property type="entry name" value="ATE_C"/>
    <property type="match status" value="1"/>
</dbReference>
<dbReference type="Pfam" id="PF04376">
    <property type="entry name" value="ATE_N"/>
    <property type="match status" value="1"/>
</dbReference>
<dbReference type="PIRSF" id="PIRSF037208">
    <property type="entry name" value="ATE_pro_prd"/>
    <property type="match status" value="1"/>
</dbReference>
<dbReference type="SUPFAM" id="SSF55729">
    <property type="entry name" value="Acyl-CoA N-acyltransferases (Nat)"/>
    <property type="match status" value="1"/>
</dbReference>
<protein>
    <recommendedName>
        <fullName evidence="1">Aspartate/glutamate leucyltransferase</fullName>
        <ecNumber evidence="1">2.3.2.29</ecNumber>
    </recommendedName>
</protein>
<feature type="chain" id="PRO_0000195109" description="Aspartate/glutamate leucyltransferase">
    <location>
        <begin position="1"/>
        <end position="235"/>
    </location>
</feature>